<dbReference type="EMBL" id="AE017126">
    <property type="protein sequence ID" value="AAQ00634.1"/>
    <property type="molecule type" value="Genomic_DNA"/>
</dbReference>
<dbReference type="RefSeq" id="NP_875981.1">
    <property type="nucleotide sequence ID" value="NC_005042.1"/>
</dbReference>
<dbReference type="RefSeq" id="WP_011125740.1">
    <property type="nucleotide sequence ID" value="NC_005042.1"/>
</dbReference>
<dbReference type="SMR" id="Q7TV92"/>
<dbReference type="STRING" id="167539.Pro_1590"/>
<dbReference type="EnsemblBacteria" id="AAQ00634">
    <property type="protein sequence ID" value="AAQ00634"/>
    <property type="gene ID" value="Pro_1590"/>
</dbReference>
<dbReference type="KEGG" id="pma:Pro_1590"/>
<dbReference type="PATRIC" id="fig|167539.5.peg.1681"/>
<dbReference type="eggNOG" id="COG0234">
    <property type="taxonomic scope" value="Bacteria"/>
</dbReference>
<dbReference type="HOGENOM" id="CLU_132825_2_1_3"/>
<dbReference type="OrthoDB" id="9806791at2"/>
<dbReference type="Proteomes" id="UP000001420">
    <property type="component" value="Chromosome"/>
</dbReference>
<dbReference type="GO" id="GO:0005737">
    <property type="term" value="C:cytoplasm"/>
    <property type="evidence" value="ECO:0007669"/>
    <property type="project" value="UniProtKB-SubCell"/>
</dbReference>
<dbReference type="GO" id="GO:0005524">
    <property type="term" value="F:ATP binding"/>
    <property type="evidence" value="ECO:0007669"/>
    <property type="project" value="InterPro"/>
</dbReference>
<dbReference type="GO" id="GO:0046872">
    <property type="term" value="F:metal ion binding"/>
    <property type="evidence" value="ECO:0007669"/>
    <property type="project" value="TreeGrafter"/>
</dbReference>
<dbReference type="GO" id="GO:0044183">
    <property type="term" value="F:protein folding chaperone"/>
    <property type="evidence" value="ECO:0007669"/>
    <property type="project" value="InterPro"/>
</dbReference>
<dbReference type="GO" id="GO:0051087">
    <property type="term" value="F:protein-folding chaperone binding"/>
    <property type="evidence" value="ECO:0007669"/>
    <property type="project" value="TreeGrafter"/>
</dbReference>
<dbReference type="GO" id="GO:0051082">
    <property type="term" value="F:unfolded protein binding"/>
    <property type="evidence" value="ECO:0007669"/>
    <property type="project" value="TreeGrafter"/>
</dbReference>
<dbReference type="GO" id="GO:0051085">
    <property type="term" value="P:chaperone cofactor-dependent protein refolding"/>
    <property type="evidence" value="ECO:0007669"/>
    <property type="project" value="TreeGrafter"/>
</dbReference>
<dbReference type="CDD" id="cd00320">
    <property type="entry name" value="cpn10"/>
    <property type="match status" value="1"/>
</dbReference>
<dbReference type="FunFam" id="2.30.33.40:FF:000001">
    <property type="entry name" value="10 kDa chaperonin"/>
    <property type="match status" value="1"/>
</dbReference>
<dbReference type="Gene3D" id="2.30.33.40">
    <property type="entry name" value="GroES chaperonin"/>
    <property type="match status" value="1"/>
</dbReference>
<dbReference type="HAMAP" id="MF_00580">
    <property type="entry name" value="CH10"/>
    <property type="match status" value="1"/>
</dbReference>
<dbReference type="InterPro" id="IPR020818">
    <property type="entry name" value="Chaperonin_GroES"/>
</dbReference>
<dbReference type="InterPro" id="IPR037124">
    <property type="entry name" value="Chaperonin_GroES_sf"/>
</dbReference>
<dbReference type="InterPro" id="IPR018369">
    <property type="entry name" value="Chaprnonin_Cpn10_CS"/>
</dbReference>
<dbReference type="InterPro" id="IPR011032">
    <property type="entry name" value="GroES-like_sf"/>
</dbReference>
<dbReference type="NCBIfam" id="NF001530">
    <property type="entry name" value="PRK00364.1-6"/>
    <property type="match status" value="1"/>
</dbReference>
<dbReference type="NCBIfam" id="NF001531">
    <property type="entry name" value="PRK00364.2-2"/>
    <property type="match status" value="1"/>
</dbReference>
<dbReference type="NCBIfam" id="NF001533">
    <property type="entry name" value="PRK00364.2-4"/>
    <property type="match status" value="1"/>
</dbReference>
<dbReference type="NCBIfam" id="NF001534">
    <property type="entry name" value="PRK00364.2-5"/>
    <property type="match status" value="1"/>
</dbReference>
<dbReference type="PANTHER" id="PTHR10772">
    <property type="entry name" value="10 KDA HEAT SHOCK PROTEIN"/>
    <property type="match status" value="1"/>
</dbReference>
<dbReference type="PANTHER" id="PTHR10772:SF58">
    <property type="entry name" value="CO-CHAPERONIN GROES"/>
    <property type="match status" value="1"/>
</dbReference>
<dbReference type="Pfam" id="PF00166">
    <property type="entry name" value="Cpn10"/>
    <property type="match status" value="1"/>
</dbReference>
<dbReference type="PRINTS" id="PR00297">
    <property type="entry name" value="CHAPERONIN10"/>
</dbReference>
<dbReference type="SMART" id="SM00883">
    <property type="entry name" value="Cpn10"/>
    <property type="match status" value="1"/>
</dbReference>
<dbReference type="SUPFAM" id="SSF50129">
    <property type="entry name" value="GroES-like"/>
    <property type="match status" value="1"/>
</dbReference>
<dbReference type="PROSITE" id="PS00681">
    <property type="entry name" value="CHAPERONINS_CPN10"/>
    <property type="match status" value="1"/>
</dbReference>
<sequence>MAAVSLSVSTVKPLGDRVFIKVSESEEKTAGGILLPDTAKEKPQVGEVAQVGPGKRNDDGSRQAPEVGVGDKVLYSKYAGTDIKLGSDEYVLLSEKDILAVVN</sequence>
<comment type="function">
    <text evidence="1">Together with the chaperonin GroEL, plays an essential role in assisting protein folding. The GroEL-GroES system forms a nano-cage that allows encapsulation of the non-native substrate proteins and provides a physical environment optimized to promote and accelerate protein folding. GroES binds to the apical surface of the GroEL ring, thereby capping the opening of the GroEL channel.</text>
</comment>
<comment type="subunit">
    <text evidence="1">Heptamer of 7 subunits arranged in a ring. Interacts with the chaperonin GroEL.</text>
</comment>
<comment type="subcellular location">
    <subcellularLocation>
        <location evidence="1">Cytoplasm</location>
    </subcellularLocation>
</comment>
<comment type="similarity">
    <text evidence="1">Belongs to the GroES chaperonin family.</text>
</comment>
<accession>Q7TV92</accession>
<evidence type="ECO:0000255" key="1">
    <source>
        <dbReference type="HAMAP-Rule" id="MF_00580"/>
    </source>
</evidence>
<reference key="1">
    <citation type="journal article" date="2003" name="Proc. Natl. Acad. Sci. U.S.A.">
        <title>Genome sequence of the cyanobacterium Prochlorococcus marinus SS120, a nearly minimal oxyphototrophic genome.</title>
        <authorList>
            <person name="Dufresne A."/>
            <person name="Salanoubat M."/>
            <person name="Partensky F."/>
            <person name="Artiguenave F."/>
            <person name="Axmann I.M."/>
            <person name="Barbe V."/>
            <person name="Duprat S."/>
            <person name="Galperin M.Y."/>
            <person name="Koonin E.V."/>
            <person name="Le Gall F."/>
            <person name="Makarova K.S."/>
            <person name="Ostrowski M."/>
            <person name="Oztas S."/>
            <person name="Robert C."/>
            <person name="Rogozin I.B."/>
            <person name="Scanlan D.J."/>
            <person name="Tandeau de Marsac N."/>
            <person name="Weissenbach J."/>
            <person name="Wincker P."/>
            <person name="Wolf Y.I."/>
            <person name="Hess W.R."/>
        </authorList>
    </citation>
    <scope>NUCLEOTIDE SEQUENCE [LARGE SCALE GENOMIC DNA]</scope>
    <source>
        <strain>SARG / CCMP1375 / SS120</strain>
    </source>
</reference>
<gene>
    <name evidence="1" type="primary">groES</name>
    <name evidence="1" type="synonym">groS</name>
    <name type="ordered locus">Pro_1590</name>
</gene>
<protein>
    <recommendedName>
        <fullName evidence="1">Co-chaperonin GroES</fullName>
    </recommendedName>
    <alternativeName>
        <fullName evidence="1">10 kDa chaperonin</fullName>
    </alternativeName>
    <alternativeName>
        <fullName evidence="1">Chaperonin-10</fullName>
        <shortName evidence="1">Cpn10</shortName>
    </alternativeName>
</protein>
<name>CH10_PROMA</name>
<proteinExistence type="inferred from homology"/>
<keyword id="KW-0143">Chaperone</keyword>
<keyword id="KW-0963">Cytoplasm</keyword>
<keyword id="KW-1185">Reference proteome</keyword>
<feature type="chain" id="PRO_0000174803" description="Co-chaperonin GroES">
    <location>
        <begin position="1"/>
        <end position="103"/>
    </location>
</feature>
<organism>
    <name type="scientific">Prochlorococcus marinus (strain SARG / CCMP1375 / SS120)</name>
    <dbReference type="NCBI Taxonomy" id="167539"/>
    <lineage>
        <taxon>Bacteria</taxon>
        <taxon>Bacillati</taxon>
        <taxon>Cyanobacteriota</taxon>
        <taxon>Cyanophyceae</taxon>
        <taxon>Synechococcales</taxon>
        <taxon>Prochlorococcaceae</taxon>
        <taxon>Prochlorococcus</taxon>
    </lineage>
</organism>